<keyword id="KW-0067">ATP-binding</keyword>
<keyword id="KW-0963">Cytoplasm</keyword>
<keyword id="KW-0418">Kinase</keyword>
<keyword id="KW-0460">Magnesium</keyword>
<keyword id="KW-0479">Metal-binding</keyword>
<keyword id="KW-0547">Nucleotide-binding</keyword>
<keyword id="KW-1185">Reference proteome</keyword>
<keyword id="KW-0808">Transferase</keyword>
<accession>O52594</accession>
<accession>A3DE81</accession>
<protein>
    <recommendedName>
        <fullName evidence="1">Acetate kinase</fullName>
        <ecNumber evidence="1">2.7.2.1</ecNumber>
    </recommendedName>
    <alternativeName>
        <fullName evidence="1">Acetokinase</fullName>
    </alternativeName>
</protein>
<proteinExistence type="inferred from homology"/>
<comment type="function">
    <text evidence="1">Catalyzes the formation of acetyl phosphate from acetate and ATP. Can also catalyze the reverse reaction.</text>
</comment>
<comment type="catalytic activity">
    <reaction evidence="1">
        <text>acetate + ATP = acetyl phosphate + ADP</text>
        <dbReference type="Rhea" id="RHEA:11352"/>
        <dbReference type="ChEBI" id="CHEBI:22191"/>
        <dbReference type="ChEBI" id="CHEBI:30089"/>
        <dbReference type="ChEBI" id="CHEBI:30616"/>
        <dbReference type="ChEBI" id="CHEBI:456216"/>
        <dbReference type="EC" id="2.7.2.1"/>
    </reaction>
</comment>
<comment type="cofactor">
    <cofactor evidence="1">
        <name>Mg(2+)</name>
        <dbReference type="ChEBI" id="CHEBI:18420"/>
    </cofactor>
    <cofactor evidence="1">
        <name>Mn(2+)</name>
        <dbReference type="ChEBI" id="CHEBI:29035"/>
    </cofactor>
    <text evidence="1">Mg(2+). Can also accept Mn(2+).</text>
</comment>
<comment type="pathway">
    <text evidence="1">Metabolic intermediate biosynthesis; acetyl-CoA biosynthesis; acetyl-CoA from acetate: step 1/2.</text>
</comment>
<comment type="subunit">
    <text evidence="1">Homodimer.</text>
</comment>
<comment type="subcellular location">
    <subcellularLocation>
        <location evidence="1">Cytoplasm</location>
    </subcellularLocation>
</comment>
<comment type="similarity">
    <text evidence="1">Belongs to the acetokinase family.</text>
</comment>
<name>ACKA_ACET2</name>
<gene>
    <name evidence="1" type="primary">ackA</name>
    <name type="synonym">ack</name>
    <name type="ordered locus">Cthe_1028</name>
</gene>
<dbReference type="EC" id="2.7.2.1" evidence="1"/>
<dbReference type="EMBL" id="AF041841">
    <property type="protein sequence ID" value="AAB96952.1"/>
    <property type="molecule type" value="Genomic_DNA"/>
</dbReference>
<dbReference type="EMBL" id="CP000568">
    <property type="protein sequence ID" value="ABN52260.1"/>
    <property type="molecule type" value="Genomic_DNA"/>
</dbReference>
<dbReference type="RefSeq" id="WP_003515609.1">
    <property type="nucleotide sequence ID" value="NC_009012.1"/>
</dbReference>
<dbReference type="SMR" id="O52594"/>
<dbReference type="STRING" id="203119.Cthe_1028"/>
<dbReference type="GeneID" id="35803776"/>
<dbReference type="KEGG" id="cth:Cthe_1028"/>
<dbReference type="eggNOG" id="COG0282">
    <property type="taxonomic scope" value="Bacteria"/>
</dbReference>
<dbReference type="HOGENOM" id="CLU_020352_0_1_9"/>
<dbReference type="OrthoDB" id="9802453at2"/>
<dbReference type="UniPathway" id="UPA00340">
    <property type="reaction ID" value="UER00458"/>
</dbReference>
<dbReference type="Proteomes" id="UP000002145">
    <property type="component" value="Chromosome"/>
</dbReference>
<dbReference type="GO" id="GO:0005737">
    <property type="term" value="C:cytoplasm"/>
    <property type="evidence" value="ECO:0007669"/>
    <property type="project" value="UniProtKB-SubCell"/>
</dbReference>
<dbReference type="GO" id="GO:0008776">
    <property type="term" value="F:acetate kinase activity"/>
    <property type="evidence" value="ECO:0007669"/>
    <property type="project" value="UniProtKB-UniRule"/>
</dbReference>
<dbReference type="GO" id="GO:0005524">
    <property type="term" value="F:ATP binding"/>
    <property type="evidence" value="ECO:0007669"/>
    <property type="project" value="UniProtKB-KW"/>
</dbReference>
<dbReference type="GO" id="GO:0000287">
    <property type="term" value="F:magnesium ion binding"/>
    <property type="evidence" value="ECO:0007669"/>
    <property type="project" value="UniProtKB-UniRule"/>
</dbReference>
<dbReference type="GO" id="GO:0006083">
    <property type="term" value="P:acetate metabolic process"/>
    <property type="evidence" value="ECO:0007669"/>
    <property type="project" value="TreeGrafter"/>
</dbReference>
<dbReference type="GO" id="GO:0006085">
    <property type="term" value="P:acetyl-CoA biosynthetic process"/>
    <property type="evidence" value="ECO:0007669"/>
    <property type="project" value="UniProtKB-UniRule"/>
</dbReference>
<dbReference type="CDD" id="cd24010">
    <property type="entry name" value="ASKHA_NBD_AcK_PK"/>
    <property type="match status" value="1"/>
</dbReference>
<dbReference type="Gene3D" id="3.30.420.40">
    <property type="match status" value="2"/>
</dbReference>
<dbReference type="HAMAP" id="MF_00020">
    <property type="entry name" value="Acetate_kinase"/>
    <property type="match status" value="1"/>
</dbReference>
<dbReference type="InterPro" id="IPR004372">
    <property type="entry name" value="Ac/propionate_kinase"/>
</dbReference>
<dbReference type="InterPro" id="IPR000890">
    <property type="entry name" value="Aliphatic_acid_kin_short-chain"/>
</dbReference>
<dbReference type="InterPro" id="IPR023865">
    <property type="entry name" value="Aliphatic_acid_kinase_CS"/>
</dbReference>
<dbReference type="InterPro" id="IPR043129">
    <property type="entry name" value="ATPase_NBD"/>
</dbReference>
<dbReference type="NCBIfam" id="TIGR00016">
    <property type="entry name" value="ackA"/>
    <property type="match status" value="1"/>
</dbReference>
<dbReference type="PANTHER" id="PTHR21060">
    <property type="entry name" value="ACETATE KINASE"/>
    <property type="match status" value="1"/>
</dbReference>
<dbReference type="PANTHER" id="PTHR21060:SF15">
    <property type="entry name" value="ACETATE KINASE-RELATED"/>
    <property type="match status" value="1"/>
</dbReference>
<dbReference type="Pfam" id="PF00871">
    <property type="entry name" value="Acetate_kinase"/>
    <property type="match status" value="1"/>
</dbReference>
<dbReference type="PIRSF" id="PIRSF000722">
    <property type="entry name" value="Acetate_prop_kin"/>
    <property type="match status" value="1"/>
</dbReference>
<dbReference type="PRINTS" id="PR00471">
    <property type="entry name" value="ACETATEKNASE"/>
</dbReference>
<dbReference type="SUPFAM" id="SSF53067">
    <property type="entry name" value="Actin-like ATPase domain"/>
    <property type="match status" value="2"/>
</dbReference>
<dbReference type="PROSITE" id="PS01075">
    <property type="entry name" value="ACETATE_KINASE_1"/>
    <property type="match status" value="1"/>
</dbReference>
<dbReference type="PROSITE" id="PS01076">
    <property type="entry name" value="ACETATE_KINASE_2"/>
    <property type="match status" value="1"/>
</dbReference>
<sequence length="399" mass="43966">MNILVINTGSSSLKYQLIDMTNESVLAKGVCDRIGLEHSFLKHTKTGGETVVIEKDLYNHKLAIQEVISALTDEKIGVIKSMSEISAVGHRIVHGGEKFKESAIIDEDVMKAIRDCVELAPLHNPSNIIGIEACKQILPDVPMVAVFDTAFHQTMPRHAYIYALPYEIYEKYKLRKYGFHGTSHKYVAHRAAQMLGKPIESLKLITCHLGNGASICAVKGGKSVDTSMGFTPLQGLCMGTRSGNVDPAVITYLMEKEKMNINDINNFLNKKSGVLGISGVSSDFRDVQDAAEKGDDRAQLALDIFCYGVRKYIGKYIAVLNGVDAVVFTAGIGENNAYIRREVLKDMDFFGIKIDLDKNEVKGKEADISAPDAKVKTLVIPTNEELEIARETLRLVKNL</sequence>
<evidence type="ECO:0000255" key="1">
    <source>
        <dbReference type="HAMAP-Rule" id="MF_00020"/>
    </source>
</evidence>
<feature type="chain" id="PRO_0000107549" description="Acetate kinase">
    <location>
        <begin position="1"/>
        <end position="399"/>
    </location>
</feature>
<feature type="active site" description="Proton donor/acceptor" evidence="1">
    <location>
        <position position="148"/>
    </location>
</feature>
<feature type="binding site" evidence="1">
    <location>
        <position position="7"/>
    </location>
    <ligand>
        <name>Mg(2+)</name>
        <dbReference type="ChEBI" id="CHEBI:18420"/>
    </ligand>
</feature>
<feature type="binding site" evidence="1">
    <location>
        <position position="14"/>
    </location>
    <ligand>
        <name>ATP</name>
        <dbReference type="ChEBI" id="CHEBI:30616"/>
    </ligand>
</feature>
<feature type="binding site" evidence="1">
    <location>
        <position position="91"/>
    </location>
    <ligand>
        <name>substrate</name>
    </ligand>
</feature>
<feature type="binding site" evidence="1">
    <location>
        <begin position="208"/>
        <end position="212"/>
    </location>
    <ligand>
        <name>ATP</name>
        <dbReference type="ChEBI" id="CHEBI:30616"/>
    </ligand>
</feature>
<feature type="binding site" evidence="1">
    <location>
        <begin position="283"/>
        <end position="285"/>
    </location>
    <ligand>
        <name>ATP</name>
        <dbReference type="ChEBI" id="CHEBI:30616"/>
    </ligand>
</feature>
<feature type="binding site" evidence="1">
    <location>
        <begin position="331"/>
        <end position="335"/>
    </location>
    <ligand>
        <name>ATP</name>
        <dbReference type="ChEBI" id="CHEBI:30616"/>
    </ligand>
</feature>
<feature type="binding site" evidence="1">
    <location>
        <position position="384"/>
    </location>
    <ligand>
        <name>Mg(2+)</name>
        <dbReference type="ChEBI" id="CHEBI:18420"/>
    </ligand>
</feature>
<feature type="site" description="Transition state stabilizer" evidence="1">
    <location>
        <position position="180"/>
    </location>
</feature>
<feature type="site" description="Transition state stabilizer" evidence="1">
    <location>
        <position position="241"/>
    </location>
</feature>
<reference key="1">
    <citation type="submission" date="1998-01" db="EMBL/GenBank/DDBJ databases">
        <authorList>
            <person name="Stevens D.R."/>
            <person name="Guerinot M.L."/>
            <person name="Lynd L.R."/>
        </authorList>
    </citation>
    <scope>NUCLEOTIDE SEQUENCE [GENOMIC DNA]</scope>
</reference>
<reference key="2">
    <citation type="submission" date="2007-02" db="EMBL/GenBank/DDBJ databases">
        <title>Complete sequence of Clostridium thermocellum ATCC 27405.</title>
        <authorList>
            <consortium name="US DOE Joint Genome Institute"/>
            <person name="Copeland A."/>
            <person name="Lucas S."/>
            <person name="Lapidus A."/>
            <person name="Barry K."/>
            <person name="Detter J.C."/>
            <person name="Glavina del Rio T."/>
            <person name="Hammon N."/>
            <person name="Israni S."/>
            <person name="Dalin E."/>
            <person name="Tice H."/>
            <person name="Pitluck S."/>
            <person name="Chertkov O."/>
            <person name="Brettin T."/>
            <person name="Bruce D."/>
            <person name="Han C."/>
            <person name="Tapia R."/>
            <person name="Gilna P."/>
            <person name="Schmutz J."/>
            <person name="Larimer F."/>
            <person name="Land M."/>
            <person name="Hauser L."/>
            <person name="Kyrpides N."/>
            <person name="Mikhailova N."/>
            <person name="Wu J.H.D."/>
            <person name="Newcomb M."/>
            <person name="Richardson P."/>
        </authorList>
    </citation>
    <scope>NUCLEOTIDE SEQUENCE [LARGE SCALE GENOMIC DNA]</scope>
    <source>
        <strain>ATCC 27405 / DSM 1237 / JCM 9322 / NBRC 103400 / NCIMB 10682 / NRRL B-4536 / VPI 7372</strain>
    </source>
</reference>
<organism>
    <name type="scientific">Acetivibrio thermocellus (strain ATCC 27405 / DSM 1237 / JCM 9322 / NBRC 103400 / NCIMB 10682 / NRRL B-4536 / VPI 7372)</name>
    <name type="common">Clostridium thermocellum</name>
    <dbReference type="NCBI Taxonomy" id="203119"/>
    <lineage>
        <taxon>Bacteria</taxon>
        <taxon>Bacillati</taxon>
        <taxon>Bacillota</taxon>
        <taxon>Clostridia</taxon>
        <taxon>Eubacteriales</taxon>
        <taxon>Oscillospiraceae</taxon>
        <taxon>Acetivibrio</taxon>
    </lineage>
</organism>